<feature type="chain" id="PRO_0000289403" description="Lipoprotein signal peptidase">
    <location>
        <begin position="1"/>
        <end position="240"/>
    </location>
</feature>
<feature type="transmembrane region" description="Helical" evidence="1">
    <location>
        <begin position="38"/>
        <end position="58"/>
    </location>
</feature>
<feature type="transmembrane region" description="Helical" evidence="1">
    <location>
        <begin position="73"/>
        <end position="93"/>
    </location>
</feature>
<feature type="transmembrane region" description="Helical" evidence="1">
    <location>
        <begin position="98"/>
        <end position="118"/>
    </location>
</feature>
<feature type="transmembrane region" description="Helical" evidence="1">
    <location>
        <begin position="120"/>
        <end position="140"/>
    </location>
</feature>
<feature type="transmembrane region" description="Helical" evidence="1">
    <location>
        <begin position="177"/>
        <end position="197"/>
    </location>
</feature>
<feature type="active site" evidence="1">
    <location>
        <position position="162"/>
    </location>
</feature>
<feature type="active site" evidence="1">
    <location>
        <position position="179"/>
    </location>
</feature>
<proteinExistence type="inferred from homology"/>
<evidence type="ECO:0000255" key="1">
    <source>
        <dbReference type="HAMAP-Rule" id="MF_00161"/>
    </source>
</evidence>
<comment type="function">
    <text evidence="1">This protein specifically catalyzes the removal of signal peptides from prolipoproteins.</text>
</comment>
<comment type="catalytic activity">
    <reaction evidence="1">
        <text>Release of signal peptides from bacterial membrane prolipoproteins. Hydrolyzes -Xaa-Yaa-Zaa-|-(S,diacylglyceryl)Cys-, in which Xaa is hydrophobic (preferably Leu), and Yaa (Ala or Ser) and Zaa (Gly or Ala) have small, neutral side chains.</text>
        <dbReference type="EC" id="3.4.23.36"/>
    </reaction>
</comment>
<comment type="pathway">
    <text evidence="1">Protein modification; lipoprotein biosynthesis (signal peptide cleavage).</text>
</comment>
<comment type="subcellular location">
    <subcellularLocation>
        <location evidence="1">Cell membrane</location>
        <topology evidence="1">Multi-pass membrane protein</topology>
    </subcellularLocation>
</comment>
<comment type="similarity">
    <text evidence="1">Belongs to the peptidase A8 family.</text>
</comment>
<protein>
    <recommendedName>
        <fullName evidence="1">Lipoprotein signal peptidase</fullName>
        <ecNumber evidence="1">3.4.23.36</ecNumber>
    </recommendedName>
    <alternativeName>
        <fullName evidence="1">Prolipoprotein signal peptidase</fullName>
    </alternativeName>
    <alternativeName>
        <fullName evidence="1">Signal peptidase II</fullName>
        <shortName evidence="1">SPase II</shortName>
    </alternativeName>
</protein>
<name>LSPA_MALP2</name>
<keyword id="KW-0064">Aspartyl protease</keyword>
<keyword id="KW-1003">Cell membrane</keyword>
<keyword id="KW-0378">Hydrolase</keyword>
<keyword id="KW-0472">Membrane</keyword>
<keyword id="KW-0645">Protease</keyword>
<keyword id="KW-1185">Reference proteome</keyword>
<keyword id="KW-0812">Transmembrane</keyword>
<keyword id="KW-1133">Transmembrane helix</keyword>
<gene>
    <name evidence="1" type="primary">lspA</name>
    <name type="ordered locus">MYPE1320</name>
</gene>
<organism>
    <name type="scientific">Malacoplasma penetrans (strain HF-2)</name>
    <name type="common">Mycoplasma penetrans</name>
    <dbReference type="NCBI Taxonomy" id="272633"/>
    <lineage>
        <taxon>Bacteria</taxon>
        <taxon>Bacillati</taxon>
        <taxon>Mycoplasmatota</taxon>
        <taxon>Mycoplasmoidales</taxon>
        <taxon>Mycoplasmoidaceae</taxon>
        <taxon>Malacoplasma</taxon>
    </lineage>
</organism>
<accession>Q8EWS0</accession>
<sequence>MIKQFFSNVYEGIKHYSNYLWELSKKQLIKIYLNKKHLIWKISIILICAFIVLLTSFLTRNSILNATQSYWELIPGFLVINITGNTGVSFGTLGDSNPSLVYFVQSIPIVLGFFVLLFSSNYLLDIGVSLVFFGGLSNIIDRSIVDNYKYLSGISTNNAVVDYFQFPFIKNSAIFNFPDTFVIIGMIFVGIQIIISFVKDYKKEKDSEENKKPIKDVVLDEERNKTKKEPIKKPIVIQKS</sequence>
<dbReference type="EC" id="3.4.23.36" evidence="1"/>
<dbReference type="EMBL" id="BA000026">
    <property type="protein sequence ID" value="BAC43924.1"/>
    <property type="molecule type" value="Genomic_DNA"/>
</dbReference>
<dbReference type="RefSeq" id="WP_011076960.1">
    <property type="nucleotide sequence ID" value="NC_004432.1"/>
</dbReference>
<dbReference type="SMR" id="Q8EWS0"/>
<dbReference type="STRING" id="272633.gene:10731226"/>
<dbReference type="KEGG" id="mpe:MYPE1320"/>
<dbReference type="eggNOG" id="COG0597">
    <property type="taxonomic scope" value="Bacteria"/>
</dbReference>
<dbReference type="HOGENOM" id="CLU_1155419_0_0_14"/>
<dbReference type="InParanoid" id="Q8EWS0"/>
<dbReference type="UniPathway" id="UPA00665"/>
<dbReference type="Proteomes" id="UP000002522">
    <property type="component" value="Chromosome"/>
</dbReference>
<dbReference type="GO" id="GO:0005886">
    <property type="term" value="C:plasma membrane"/>
    <property type="evidence" value="ECO:0007669"/>
    <property type="project" value="UniProtKB-SubCell"/>
</dbReference>
<dbReference type="GO" id="GO:0004190">
    <property type="term" value="F:aspartic-type endopeptidase activity"/>
    <property type="evidence" value="ECO:0007669"/>
    <property type="project" value="UniProtKB-UniRule"/>
</dbReference>
<dbReference type="GO" id="GO:0006508">
    <property type="term" value="P:proteolysis"/>
    <property type="evidence" value="ECO:0007669"/>
    <property type="project" value="UniProtKB-KW"/>
</dbReference>
<dbReference type="HAMAP" id="MF_00161">
    <property type="entry name" value="LspA"/>
    <property type="match status" value="1"/>
</dbReference>
<dbReference type="InterPro" id="IPR001872">
    <property type="entry name" value="Peptidase_A8"/>
</dbReference>
<dbReference type="NCBIfam" id="NF011361">
    <property type="entry name" value="PRK14780.1"/>
    <property type="match status" value="1"/>
</dbReference>
<dbReference type="PANTHER" id="PTHR33695">
    <property type="entry name" value="LIPOPROTEIN SIGNAL PEPTIDASE"/>
    <property type="match status" value="1"/>
</dbReference>
<dbReference type="PANTHER" id="PTHR33695:SF1">
    <property type="entry name" value="LIPOPROTEIN SIGNAL PEPTIDASE"/>
    <property type="match status" value="1"/>
</dbReference>
<dbReference type="Pfam" id="PF01252">
    <property type="entry name" value="Peptidase_A8"/>
    <property type="match status" value="1"/>
</dbReference>
<dbReference type="PRINTS" id="PR00781">
    <property type="entry name" value="LIPOSIGPTASE"/>
</dbReference>
<reference key="1">
    <citation type="journal article" date="2002" name="Nucleic Acids Res.">
        <title>The complete genomic sequence of Mycoplasma penetrans, an intracellular bacterial pathogen in humans.</title>
        <authorList>
            <person name="Sasaki Y."/>
            <person name="Ishikawa J."/>
            <person name="Yamashita A."/>
            <person name="Oshima K."/>
            <person name="Kenri T."/>
            <person name="Furuya K."/>
            <person name="Yoshino C."/>
            <person name="Horino A."/>
            <person name="Shiba T."/>
            <person name="Sasaki T."/>
            <person name="Hattori M."/>
        </authorList>
    </citation>
    <scope>NUCLEOTIDE SEQUENCE [LARGE SCALE GENOMIC DNA]</scope>
    <source>
        <strain>HF-2</strain>
    </source>
</reference>